<sequence>MRIGIISRTDKEEAIELDDTIIKYLFENNIEVELDSQLTKKLPQYSENSVDITKMNADIVLCVGGDGTVLHAQRYLSPKKIPILSINMGTVGFLTEVDPEDIFECLDKLLSYDFFIEERLQLDVLIDSQWHTVLNELVLMTSQPAKMLDLRVSVDEEIVDEVRADGLIISTPSGSTAYAMSAGGPIVDPRVDAAIIIPICPFKLNTRPKIVPADSIITVKFLKEGKKGVAVLDGIVNKEFDYLGEIKLKKSENSAYFVRFKKNFYNSVNNKLIVG</sequence>
<proteinExistence type="inferred from homology"/>
<dbReference type="EC" id="2.7.1.23" evidence="1"/>
<dbReference type="EMBL" id="CP000102">
    <property type="protein sequence ID" value="ABC57707.1"/>
    <property type="molecule type" value="Genomic_DNA"/>
</dbReference>
<dbReference type="RefSeq" id="WP_011406906.1">
    <property type="nucleotide sequence ID" value="NC_007681.1"/>
</dbReference>
<dbReference type="SMR" id="Q2NEP6"/>
<dbReference type="STRING" id="339860.Msp_1330"/>
<dbReference type="KEGG" id="mst:Msp_1330"/>
<dbReference type="eggNOG" id="arCOG01348">
    <property type="taxonomic scope" value="Archaea"/>
</dbReference>
<dbReference type="HOGENOM" id="CLU_008831_0_1_2"/>
<dbReference type="OrthoDB" id="77798at2157"/>
<dbReference type="Proteomes" id="UP000001931">
    <property type="component" value="Chromosome"/>
</dbReference>
<dbReference type="GO" id="GO:0005737">
    <property type="term" value="C:cytoplasm"/>
    <property type="evidence" value="ECO:0007669"/>
    <property type="project" value="UniProtKB-SubCell"/>
</dbReference>
<dbReference type="GO" id="GO:0005524">
    <property type="term" value="F:ATP binding"/>
    <property type="evidence" value="ECO:0007669"/>
    <property type="project" value="UniProtKB-KW"/>
</dbReference>
<dbReference type="GO" id="GO:0046872">
    <property type="term" value="F:metal ion binding"/>
    <property type="evidence" value="ECO:0007669"/>
    <property type="project" value="UniProtKB-UniRule"/>
</dbReference>
<dbReference type="GO" id="GO:0003951">
    <property type="term" value="F:NAD+ kinase activity"/>
    <property type="evidence" value="ECO:0007669"/>
    <property type="project" value="UniProtKB-UniRule"/>
</dbReference>
<dbReference type="GO" id="GO:0019674">
    <property type="term" value="P:NAD metabolic process"/>
    <property type="evidence" value="ECO:0007669"/>
    <property type="project" value="InterPro"/>
</dbReference>
<dbReference type="GO" id="GO:0006741">
    <property type="term" value="P:NADP biosynthetic process"/>
    <property type="evidence" value="ECO:0007669"/>
    <property type="project" value="UniProtKB-UniRule"/>
</dbReference>
<dbReference type="Gene3D" id="3.40.50.10330">
    <property type="entry name" value="Probable inorganic polyphosphate/atp-NAD kinase, domain 1"/>
    <property type="match status" value="1"/>
</dbReference>
<dbReference type="Gene3D" id="2.60.200.30">
    <property type="entry name" value="Probable inorganic polyphosphate/atp-NAD kinase, domain 2"/>
    <property type="match status" value="1"/>
</dbReference>
<dbReference type="HAMAP" id="MF_00361">
    <property type="entry name" value="NAD_kinase"/>
    <property type="match status" value="1"/>
</dbReference>
<dbReference type="InterPro" id="IPR017438">
    <property type="entry name" value="ATP-NAD_kinase_N"/>
</dbReference>
<dbReference type="InterPro" id="IPR017437">
    <property type="entry name" value="ATP-NAD_kinase_PpnK-typ_C"/>
</dbReference>
<dbReference type="InterPro" id="IPR016064">
    <property type="entry name" value="NAD/diacylglycerol_kinase_sf"/>
</dbReference>
<dbReference type="InterPro" id="IPR002504">
    <property type="entry name" value="NADK"/>
</dbReference>
<dbReference type="NCBIfam" id="NF002984">
    <property type="entry name" value="PRK03708.1"/>
    <property type="match status" value="1"/>
</dbReference>
<dbReference type="PANTHER" id="PTHR20275:SF43">
    <property type="entry name" value="BIFUNCTIONAL NADP PHOSPHATASE_NAD KINASE"/>
    <property type="match status" value="1"/>
</dbReference>
<dbReference type="PANTHER" id="PTHR20275">
    <property type="entry name" value="NAD KINASE"/>
    <property type="match status" value="1"/>
</dbReference>
<dbReference type="Pfam" id="PF01513">
    <property type="entry name" value="NAD_kinase"/>
    <property type="match status" value="1"/>
</dbReference>
<dbReference type="Pfam" id="PF20143">
    <property type="entry name" value="NAD_kinase_C"/>
    <property type="match status" value="1"/>
</dbReference>
<dbReference type="SUPFAM" id="SSF111331">
    <property type="entry name" value="NAD kinase/diacylglycerol kinase-like"/>
    <property type="match status" value="1"/>
</dbReference>
<name>NADK_METST</name>
<organism>
    <name type="scientific">Methanosphaera stadtmanae (strain ATCC 43021 / DSM 3091 / JCM 11832 / MCB-3)</name>
    <dbReference type="NCBI Taxonomy" id="339860"/>
    <lineage>
        <taxon>Archaea</taxon>
        <taxon>Methanobacteriati</taxon>
        <taxon>Methanobacteriota</taxon>
        <taxon>Methanomada group</taxon>
        <taxon>Methanobacteria</taxon>
        <taxon>Methanobacteriales</taxon>
        <taxon>Methanobacteriaceae</taxon>
        <taxon>Methanosphaera</taxon>
    </lineage>
</organism>
<keyword id="KW-0067">ATP-binding</keyword>
<keyword id="KW-0963">Cytoplasm</keyword>
<keyword id="KW-0418">Kinase</keyword>
<keyword id="KW-0520">NAD</keyword>
<keyword id="KW-0521">NADP</keyword>
<keyword id="KW-0547">Nucleotide-binding</keyword>
<keyword id="KW-1185">Reference proteome</keyword>
<keyword id="KW-0808">Transferase</keyword>
<gene>
    <name evidence="1" type="primary">nadK</name>
    <name type="ordered locus">Msp_1330</name>
</gene>
<reference key="1">
    <citation type="journal article" date="2006" name="J. Bacteriol.">
        <title>The genome sequence of Methanosphaera stadtmanae reveals why this human intestinal archaeon is restricted to methanol and H2 for methane formation and ATP synthesis.</title>
        <authorList>
            <person name="Fricke W.F."/>
            <person name="Seedorf H."/>
            <person name="Henne A."/>
            <person name="Kruer M."/>
            <person name="Liesegang H."/>
            <person name="Hedderich R."/>
            <person name="Gottschalk G."/>
            <person name="Thauer R.K."/>
        </authorList>
    </citation>
    <scope>NUCLEOTIDE SEQUENCE [LARGE SCALE GENOMIC DNA]</scope>
    <source>
        <strain>ATCC 43021 / DSM 3091 / JCM 11832 / MCB-3</strain>
    </source>
</reference>
<feature type="chain" id="PRO_1000059881" description="NAD kinase">
    <location>
        <begin position="1"/>
        <end position="275"/>
    </location>
</feature>
<feature type="active site" description="Proton acceptor" evidence="1">
    <location>
        <position position="66"/>
    </location>
</feature>
<feature type="binding site" evidence="1">
    <location>
        <begin position="66"/>
        <end position="67"/>
    </location>
    <ligand>
        <name>NAD(+)</name>
        <dbReference type="ChEBI" id="CHEBI:57540"/>
    </ligand>
</feature>
<feature type="binding site" evidence="1">
    <location>
        <position position="71"/>
    </location>
    <ligand>
        <name>NAD(+)</name>
        <dbReference type="ChEBI" id="CHEBI:57540"/>
    </ligand>
</feature>
<feature type="binding site" evidence="1">
    <location>
        <begin position="135"/>
        <end position="136"/>
    </location>
    <ligand>
        <name>NAD(+)</name>
        <dbReference type="ChEBI" id="CHEBI:57540"/>
    </ligand>
</feature>
<feature type="binding site" evidence="1">
    <location>
        <position position="146"/>
    </location>
    <ligand>
        <name>NAD(+)</name>
        <dbReference type="ChEBI" id="CHEBI:57540"/>
    </ligand>
</feature>
<feature type="binding site" evidence="1">
    <location>
        <position position="163"/>
    </location>
    <ligand>
        <name>NAD(+)</name>
        <dbReference type="ChEBI" id="CHEBI:57540"/>
    </ligand>
</feature>
<feature type="binding site" evidence="1">
    <location>
        <position position="165"/>
    </location>
    <ligand>
        <name>NAD(+)</name>
        <dbReference type="ChEBI" id="CHEBI:57540"/>
    </ligand>
</feature>
<feature type="binding site" evidence="1">
    <location>
        <begin position="176"/>
        <end position="181"/>
    </location>
    <ligand>
        <name>NAD(+)</name>
        <dbReference type="ChEBI" id="CHEBI:57540"/>
    </ligand>
</feature>
<protein>
    <recommendedName>
        <fullName evidence="1">NAD kinase</fullName>
        <ecNumber evidence="1">2.7.1.23</ecNumber>
    </recommendedName>
    <alternativeName>
        <fullName evidence="1">ATP-dependent NAD kinase</fullName>
    </alternativeName>
</protein>
<evidence type="ECO:0000255" key="1">
    <source>
        <dbReference type="HAMAP-Rule" id="MF_00361"/>
    </source>
</evidence>
<comment type="function">
    <text evidence="1">Involved in the regulation of the intracellular balance of NAD and NADP, and is a key enzyme in the biosynthesis of NADP. Catalyzes specifically the phosphorylation on 2'-hydroxyl of the adenosine moiety of NAD to yield NADP.</text>
</comment>
<comment type="catalytic activity">
    <reaction evidence="1">
        <text>NAD(+) + ATP = ADP + NADP(+) + H(+)</text>
        <dbReference type="Rhea" id="RHEA:18629"/>
        <dbReference type="ChEBI" id="CHEBI:15378"/>
        <dbReference type="ChEBI" id="CHEBI:30616"/>
        <dbReference type="ChEBI" id="CHEBI:57540"/>
        <dbReference type="ChEBI" id="CHEBI:58349"/>
        <dbReference type="ChEBI" id="CHEBI:456216"/>
        <dbReference type="EC" id="2.7.1.23"/>
    </reaction>
</comment>
<comment type="cofactor">
    <cofactor evidence="1">
        <name>a divalent metal cation</name>
        <dbReference type="ChEBI" id="CHEBI:60240"/>
    </cofactor>
</comment>
<comment type="subcellular location">
    <subcellularLocation>
        <location evidence="1">Cytoplasm</location>
    </subcellularLocation>
</comment>
<comment type="similarity">
    <text evidence="1">Belongs to the NAD kinase family.</text>
</comment>
<accession>Q2NEP6</accession>